<dbReference type="EMBL" id="CP000608">
    <property type="protein sequence ID" value="ABO47418.1"/>
    <property type="molecule type" value="Genomic_DNA"/>
</dbReference>
<dbReference type="RefSeq" id="WP_003014360.1">
    <property type="nucleotide sequence ID" value="NC_009257.1"/>
</dbReference>
<dbReference type="SMR" id="A4IZR8"/>
<dbReference type="KEGG" id="ftw:FTW_1742"/>
<dbReference type="HOGENOM" id="CLU_098841_0_1_6"/>
<dbReference type="GO" id="GO:0022625">
    <property type="term" value="C:cytosolic large ribosomal subunit"/>
    <property type="evidence" value="ECO:0007669"/>
    <property type="project" value="TreeGrafter"/>
</dbReference>
<dbReference type="GO" id="GO:0008097">
    <property type="term" value="F:5S rRNA binding"/>
    <property type="evidence" value="ECO:0007669"/>
    <property type="project" value="TreeGrafter"/>
</dbReference>
<dbReference type="GO" id="GO:0003735">
    <property type="term" value="F:structural constituent of ribosome"/>
    <property type="evidence" value="ECO:0007669"/>
    <property type="project" value="InterPro"/>
</dbReference>
<dbReference type="GO" id="GO:0006412">
    <property type="term" value="P:translation"/>
    <property type="evidence" value="ECO:0007669"/>
    <property type="project" value="UniProtKB-UniRule"/>
</dbReference>
<dbReference type="CDD" id="cd00432">
    <property type="entry name" value="Ribosomal_L18_L5e"/>
    <property type="match status" value="1"/>
</dbReference>
<dbReference type="FunFam" id="3.30.420.100:FF:000001">
    <property type="entry name" value="50S ribosomal protein L18"/>
    <property type="match status" value="1"/>
</dbReference>
<dbReference type="Gene3D" id="3.30.420.100">
    <property type="match status" value="1"/>
</dbReference>
<dbReference type="HAMAP" id="MF_01337_B">
    <property type="entry name" value="Ribosomal_uL18_B"/>
    <property type="match status" value="1"/>
</dbReference>
<dbReference type="InterPro" id="IPR004389">
    <property type="entry name" value="Ribosomal_uL18_bac-type"/>
</dbReference>
<dbReference type="InterPro" id="IPR005484">
    <property type="entry name" value="Ribosomal_uL18_bac/euk"/>
</dbReference>
<dbReference type="NCBIfam" id="TIGR00060">
    <property type="entry name" value="L18_bact"/>
    <property type="match status" value="1"/>
</dbReference>
<dbReference type="PANTHER" id="PTHR12899">
    <property type="entry name" value="39S RIBOSOMAL PROTEIN L18, MITOCHONDRIAL"/>
    <property type="match status" value="1"/>
</dbReference>
<dbReference type="PANTHER" id="PTHR12899:SF3">
    <property type="entry name" value="LARGE RIBOSOMAL SUBUNIT PROTEIN UL18M"/>
    <property type="match status" value="1"/>
</dbReference>
<dbReference type="Pfam" id="PF00861">
    <property type="entry name" value="Ribosomal_L18p"/>
    <property type="match status" value="1"/>
</dbReference>
<dbReference type="SUPFAM" id="SSF53137">
    <property type="entry name" value="Translational machinery components"/>
    <property type="match status" value="1"/>
</dbReference>
<gene>
    <name evidence="1" type="primary">rplR</name>
    <name type="ordered locus">FTW_1742</name>
</gene>
<accession>A4IZR8</accession>
<feature type="chain" id="PRO_1000053029" description="Large ribosomal subunit protein uL18">
    <location>
        <begin position="1"/>
        <end position="117"/>
    </location>
</feature>
<comment type="function">
    <text evidence="1">This is one of the proteins that bind and probably mediate the attachment of the 5S RNA into the large ribosomal subunit, where it forms part of the central protuberance.</text>
</comment>
<comment type="subunit">
    <text evidence="1">Part of the 50S ribosomal subunit; part of the 5S rRNA/L5/L18/L25 subcomplex. Contacts the 5S and 23S rRNAs.</text>
</comment>
<comment type="similarity">
    <text evidence="1">Belongs to the universal ribosomal protein uL18 family.</text>
</comment>
<sequence length="117" mass="13036">MDKKTARLSRSKRTRIKLRELGHTRLCVYRTPRHVYAQVISGDGSTVLVAASTVEKDVKAKCKYTGNVESAAIVGEIIADRCKEKGISQVAFDRSGYKYHGRVKALVEAAREHGLQF</sequence>
<reference key="1">
    <citation type="journal article" date="2007" name="PLoS ONE">
        <title>Complete genomic characterization of a pathogenic A.II strain of Francisella tularensis subspecies tularensis.</title>
        <authorList>
            <person name="Beckstrom-Sternberg S.M."/>
            <person name="Auerbach R.K."/>
            <person name="Godbole S."/>
            <person name="Pearson J.V."/>
            <person name="Beckstrom-Sternberg J.S."/>
            <person name="Deng Z."/>
            <person name="Munk C."/>
            <person name="Kubota K."/>
            <person name="Zhou Y."/>
            <person name="Bruce D."/>
            <person name="Noronha J."/>
            <person name="Scheuermann R.H."/>
            <person name="Wang A."/>
            <person name="Wei X."/>
            <person name="Wang J."/>
            <person name="Hao J."/>
            <person name="Wagner D.M."/>
            <person name="Brettin T.S."/>
            <person name="Brown N."/>
            <person name="Gilna P."/>
            <person name="Keim P.S."/>
        </authorList>
    </citation>
    <scope>NUCLEOTIDE SEQUENCE [LARGE SCALE GENOMIC DNA]</scope>
    <source>
        <strain>WY96-3418</strain>
    </source>
</reference>
<protein>
    <recommendedName>
        <fullName evidence="1">Large ribosomal subunit protein uL18</fullName>
    </recommendedName>
    <alternativeName>
        <fullName evidence="2">50S ribosomal protein L18</fullName>
    </alternativeName>
</protein>
<evidence type="ECO:0000255" key="1">
    <source>
        <dbReference type="HAMAP-Rule" id="MF_01337"/>
    </source>
</evidence>
<evidence type="ECO:0000305" key="2"/>
<keyword id="KW-0687">Ribonucleoprotein</keyword>
<keyword id="KW-0689">Ribosomal protein</keyword>
<keyword id="KW-0694">RNA-binding</keyword>
<keyword id="KW-0699">rRNA-binding</keyword>
<organism>
    <name type="scientific">Francisella tularensis subsp. tularensis (strain WY96-3418)</name>
    <dbReference type="NCBI Taxonomy" id="418136"/>
    <lineage>
        <taxon>Bacteria</taxon>
        <taxon>Pseudomonadati</taxon>
        <taxon>Pseudomonadota</taxon>
        <taxon>Gammaproteobacteria</taxon>
        <taxon>Thiotrichales</taxon>
        <taxon>Francisellaceae</taxon>
        <taxon>Francisella</taxon>
    </lineage>
</organism>
<proteinExistence type="inferred from homology"/>
<name>RL18_FRATW</name>